<gene>
    <name evidence="1" type="primary">gatB</name>
    <name type="ordered locus">SGO_0437</name>
</gene>
<organism>
    <name type="scientific">Streptococcus gordonii (strain Challis / ATCC 35105 / BCRC 15272 / CH1 / DL1 / V288)</name>
    <dbReference type="NCBI Taxonomy" id="467705"/>
    <lineage>
        <taxon>Bacteria</taxon>
        <taxon>Bacillati</taxon>
        <taxon>Bacillota</taxon>
        <taxon>Bacilli</taxon>
        <taxon>Lactobacillales</taxon>
        <taxon>Streptococcaceae</taxon>
        <taxon>Streptococcus</taxon>
    </lineage>
</organism>
<proteinExistence type="inferred from homology"/>
<reference key="1">
    <citation type="journal article" date="2007" name="J. Bacteriol.">
        <title>Genome-wide transcriptional changes in Streptococcus gordonii in response to competence signaling peptide.</title>
        <authorList>
            <person name="Vickerman M.M."/>
            <person name="Iobst S."/>
            <person name="Jesionowski A.M."/>
            <person name="Gill S.R."/>
        </authorList>
    </citation>
    <scope>NUCLEOTIDE SEQUENCE [LARGE SCALE GENOMIC DNA]</scope>
    <source>
        <strain>Challis / ATCC 35105 / BCRC 15272 / CH1 / DL1 / V288</strain>
    </source>
</reference>
<dbReference type="EC" id="6.3.5.-" evidence="1"/>
<dbReference type="EMBL" id="CP000725">
    <property type="protein sequence ID" value="ABV10473.1"/>
    <property type="molecule type" value="Genomic_DNA"/>
</dbReference>
<dbReference type="RefSeq" id="WP_011999946.1">
    <property type="nucleotide sequence ID" value="NC_009785.1"/>
</dbReference>
<dbReference type="SMR" id="A8AVE3"/>
<dbReference type="STRING" id="467705.SGO_0437"/>
<dbReference type="KEGG" id="sgo:SGO_0437"/>
<dbReference type="eggNOG" id="COG0064">
    <property type="taxonomic scope" value="Bacteria"/>
</dbReference>
<dbReference type="HOGENOM" id="CLU_019240_0_0_9"/>
<dbReference type="Proteomes" id="UP000001131">
    <property type="component" value="Chromosome"/>
</dbReference>
<dbReference type="GO" id="GO:0050566">
    <property type="term" value="F:asparaginyl-tRNA synthase (glutamine-hydrolyzing) activity"/>
    <property type="evidence" value="ECO:0007669"/>
    <property type="project" value="RHEA"/>
</dbReference>
<dbReference type="GO" id="GO:0005524">
    <property type="term" value="F:ATP binding"/>
    <property type="evidence" value="ECO:0007669"/>
    <property type="project" value="UniProtKB-KW"/>
</dbReference>
<dbReference type="GO" id="GO:0050567">
    <property type="term" value="F:glutaminyl-tRNA synthase (glutamine-hydrolyzing) activity"/>
    <property type="evidence" value="ECO:0007669"/>
    <property type="project" value="UniProtKB-UniRule"/>
</dbReference>
<dbReference type="GO" id="GO:0070681">
    <property type="term" value="P:glutaminyl-tRNAGln biosynthesis via transamidation"/>
    <property type="evidence" value="ECO:0007669"/>
    <property type="project" value="TreeGrafter"/>
</dbReference>
<dbReference type="GO" id="GO:0006412">
    <property type="term" value="P:translation"/>
    <property type="evidence" value="ECO:0007669"/>
    <property type="project" value="UniProtKB-UniRule"/>
</dbReference>
<dbReference type="FunFam" id="1.10.10.410:FF:000001">
    <property type="entry name" value="Aspartyl/glutamyl-tRNA(Asn/Gln) amidotransferase subunit B"/>
    <property type="match status" value="1"/>
</dbReference>
<dbReference type="FunFam" id="1.10.150.380:FF:000001">
    <property type="entry name" value="Aspartyl/glutamyl-tRNA(Asn/Gln) amidotransferase subunit B"/>
    <property type="match status" value="1"/>
</dbReference>
<dbReference type="Gene3D" id="1.10.10.410">
    <property type="match status" value="1"/>
</dbReference>
<dbReference type="Gene3D" id="1.10.150.380">
    <property type="entry name" value="GatB domain, N-terminal subdomain"/>
    <property type="match status" value="1"/>
</dbReference>
<dbReference type="HAMAP" id="MF_00121">
    <property type="entry name" value="GatB"/>
    <property type="match status" value="1"/>
</dbReference>
<dbReference type="InterPro" id="IPR017959">
    <property type="entry name" value="Asn/Gln-tRNA_amidoTrfase_suB/E"/>
</dbReference>
<dbReference type="InterPro" id="IPR006075">
    <property type="entry name" value="Asn/Gln-tRNA_Trfase_suB/E_cat"/>
</dbReference>
<dbReference type="InterPro" id="IPR018027">
    <property type="entry name" value="Asn/Gln_amidotransferase"/>
</dbReference>
<dbReference type="InterPro" id="IPR003789">
    <property type="entry name" value="Asn/Gln_tRNA_amidoTrase-B-like"/>
</dbReference>
<dbReference type="InterPro" id="IPR004413">
    <property type="entry name" value="GatB"/>
</dbReference>
<dbReference type="InterPro" id="IPR042114">
    <property type="entry name" value="GatB_C_1"/>
</dbReference>
<dbReference type="InterPro" id="IPR023168">
    <property type="entry name" value="GatB_Yqey_C_2"/>
</dbReference>
<dbReference type="InterPro" id="IPR017958">
    <property type="entry name" value="Gln-tRNA_amidoTrfase_suB_CS"/>
</dbReference>
<dbReference type="InterPro" id="IPR014746">
    <property type="entry name" value="Gln_synth/guanido_kin_cat_dom"/>
</dbReference>
<dbReference type="NCBIfam" id="TIGR00133">
    <property type="entry name" value="gatB"/>
    <property type="match status" value="1"/>
</dbReference>
<dbReference type="NCBIfam" id="NF004011">
    <property type="entry name" value="PRK05477.1-1"/>
    <property type="match status" value="1"/>
</dbReference>
<dbReference type="NCBIfam" id="NF004012">
    <property type="entry name" value="PRK05477.1-2"/>
    <property type="match status" value="1"/>
</dbReference>
<dbReference type="NCBIfam" id="NF004014">
    <property type="entry name" value="PRK05477.1-4"/>
    <property type="match status" value="1"/>
</dbReference>
<dbReference type="PANTHER" id="PTHR11659">
    <property type="entry name" value="GLUTAMYL-TRNA GLN AMIDOTRANSFERASE SUBUNIT B MITOCHONDRIAL AND PROKARYOTIC PET112-RELATED"/>
    <property type="match status" value="1"/>
</dbReference>
<dbReference type="PANTHER" id="PTHR11659:SF0">
    <property type="entry name" value="GLUTAMYL-TRNA(GLN) AMIDOTRANSFERASE SUBUNIT B, MITOCHONDRIAL"/>
    <property type="match status" value="1"/>
</dbReference>
<dbReference type="Pfam" id="PF02934">
    <property type="entry name" value="GatB_N"/>
    <property type="match status" value="1"/>
</dbReference>
<dbReference type="Pfam" id="PF02637">
    <property type="entry name" value="GatB_Yqey"/>
    <property type="match status" value="1"/>
</dbReference>
<dbReference type="SMART" id="SM00845">
    <property type="entry name" value="GatB_Yqey"/>
    <property type="match status" value="1"/>
</dbReference>
<dbReference type="SUPFAM" id="SSF89095">
    <property type="entry name" value="GatB/YqeY motif"/>
    <property type="match status" value="1"/>
</dbReference>
<dbReference type="SUPFAM" id="SSF55931">
    <property type="entry name" value="Glutamine synthetase/guanido kinase"/>
    <property type="match status" value="1"/>
</dbReference>
<dbReference type="PROSITE" id="PS01234">
    <property type="entry name" value="GATB"/>
    <property type="match status" value="1"/>
</dbReference>
<protein>
    <recommendedName>
        <fullName evidence="1">Aspartyl/glutamyl-tRNA(Asn/Gln) amidotransferase subunit B</fullName>
        <shortName evidence="1">Asp/Glu-ADT subunit B</shortName>
        <ecNumber evidence="1">6.3.5.-</ecNumber>
    </recommendedName>
</protein>
<evidence type="ECO:0000255" key="1">
    <source>
        <dbReference type="HAMAP-Rule" id="MF_00121"/>
    </source>
</evidence>
<accession>A8AVE3</accession>
<comment type="function">
    <text evidence="1">Allows the formation of correctly charged Asn-tRNA(Asn) or Gln-tRNA(Gln) through the transamidation of misacylated Asp-tRNA(Asn) or Glu-tRNA(Gln) in organisms which lack either or both of asparaginyl-tRNA or glutaminyl-tRNA synthetases. The reaction takes place in the presence of glutamine and ATP through an activated phospho-Asp-tRNA(Asn) or phospho-Glu-tRNA(Gln).</text>
</comment>
<comment type="catalytic activity">
    <reaction evidence="1">
        <text>L-glutamyl-tRNA(Gln) + L-glutamine + ATP + H2O = L-glutaminyl-tRNA(Gln) + L-glutamate + ADP + phosphate + H(+)</text>
        <dbReference type="Rhea" id="RHEA:17521"/>
        <dbReference type="Rhea" id="RHEA-COMP:9681"/>
        <dbReference type="Rhea" id="RHEA-COMP:9684"/>
        <dbReference type="ChEBI" id="CHEBI:15377"/>
        <dbReference type="ChEBI" id="CHEBI:15378"/>
        <dbReference type="ChEBI" id="CHEBI:29985"/>
        <dbReference type="ChEBI" id="CHEBI:30616"/>
        <dbReference type="ChEBI" id="CHEBI:43474"/>
        <dbReference type="ChEBI" id="CHEBI:58359"/>
        <dbReference type="ChEBI" id="CHEBI:78520"/>
        <dbReference type="ChEBI" id="CHEBI:78521"/>
        <dbReference type="ChEBI" id="CHEBI:456216"/>
    </reaction>
</comment>
<comment type="catalytic activity">
    <reaction evidence="1">
        <text>L-aspartyl-tRNA(Asn) + L-glutamine + ATP + H2O = L-asparaginyl-tRNA(Asn) + L-glutamate + ADP + phosphate + 2 H(+)</text>
        <dbReference type="Rhea" id="RHEA:14513"/>
        <dbReference type="Rhea" id="RHEA-COMP:9674"/>
        <dbReference type="Rhea" id="RHEA-COMP:9677"/>
        <dbReference type="ChEBI" id="CHEBI:15377"/>
        <dbReference type="ChEBI" id="CHEBI:15378"/>
        <dbReference type="ChEBI" id="CHEBI:29985"/>
        <dbReference type="ChEBI" id="CHEBI:30616"/>
        <dbReference type="ChEBI" id="CHEBI:43474"/>
        <dbReference type="ChEBI" id="CHEBI:58359"/>
        <dbReference type="ChEBI" id="CHEBI:78515"/>
        <dbReference type="ChEBI" id="CHEBI:78516"/>
        <dbReference type="ChEBI" id="CHEBI:456216"/>
    </reaction>
</comment>
<comment type="subunit">
    <text evidence="1">Heterotrimer of A, B and C subunits.</text>
</comment>
<comment type="similarity">
    <text evidence="1">Belongs to the GatB/GatE family. GatB subfamily.</text>
</comment>
<sequence>MNFETVIGLEVHVELKTNSKIFSPAPAHFGEDPNANTNIIDWSFPGVLPVMNKGVIDYGIKAALALNMDIHQKMHFDRKNYFYPDNPKAYQISQFDEPIGYNGWIEIELEDGTTKKIRIERAHLEEDAGKNTHGSDGYSYVDLNRQGVPLIEIVSEADMRSPEEAYAYLTALKEIIQYTGISDVKMEEGSMRVDANISIRPYGQEEFGTKTELKNLNSFNFVRKGLAFEEKRQAEILRSGGQIRQETRRYDEATGETLLMRVKEGSADYRYFPEPDLPIFEIEDAWIEQVRNSLPAFPKERRAKYVGDYGLSDYDAKQLTATKAVSDFFEAALAAGGDAKAVSNWLQGDVAQYLNAEGKTISEIELTPENLTEMIALIADGTISSKIAKKVFVHLAKNGGSAKEYVQKAGLIQISDPAQLLPIIQQVFADNEKAINDYKGGNKNAAKSLIGQLMKATKGQANPQVAQKLLNEELEKL</sequence>
<keyword id="KW-0067">ATP-binding</keyword>
<keyword id="KW-0436">Ligase</keyword>
<keyword id="KW-0547">Nucleotide-binding</keyword>
<keyword id="KW-0648">Protein biosynthesis</keyword>
<keyword id="KW-1185">Reference proteome</keyword>
<name>GATB_STRGC</name>
<feature type="chain" id="PRO_1000076172" description="Aspartyl/glutamyl-tRNA(Asn/Gln) amidotransferase subunit B">
    <location>
        <begin position="1"/>
        <end position="477"/>
    </location>
</feature>